<protein>
    <recommendedName>
        <fullName>3-mercaptopyruvate sulfurtransferase</fullName>
        <shortName>MST</shortName>
        <ecNumber evidence="2">2.8.1.2</ecNumber>
    </recommendedName>
</protein>
<dbReference type="EC" id="2.8.1.2" evidence="2"/>
<dbReference type="EMBL" id="X59434">
    <property type="protein sequence ID" value="CAA42060.1"/>
    <property type="molecule type" value="mRNA"/>
</dbReference>
<dbReference type="EMBL" id="BT019636">
    <property type="protein sequence ID" value="AAV38442.1"/>
    <property type="molecule type" value="mRNA"/>
</dbReference>
<dbReference type="EMBL" id="AK055733">
    <property type="protein sequence ID" value="BAG51564.1"/>
    <property type="molecule type" value="mRNA"/>
</dbReference>
<dbReference type="EMBL" id="CR541712">
    <property type="protein sequence ID" value="CAG46513.1"/>
    <property type="molecule type" value="mRNA"/>
</dbReference>
<dbReference type="EMBL" id="Z73420">
    <property type="status" value="NOT_ANNOTATED_CDS"/>
    <property type="molecule type" value="Genomic_DNA"/>
</dbReference>
<dbReference type="EMBL" id="CH471095">
    <property type="protein sequence ID" value="EAW60133.1"/>
    <property type="molecule type" value="Genomic_DNA"/>
</dbReference>
<dbReference type="EMBL" id="CH471095">
    <property type="protein sequence ID" value="EAW60134.1"/>
    <property type="molecule type" value="Genomic_DNA"/>
</dbReference>
<dbReference type="EMBL" id="CH471095">
    <property type="protein sequence ID" value="EAW60135.1"/>
    <property type="molecule type" value="Genomic_DNA"/>
</dbReference>
<dbReference type="EMBL" id="BC003508">
    <property type="protein sequence ID" value="AAH03508.1"/>
    <property type="molecule type" value="mRNA"/>
</dbReference>
<dbReference type="EMBL" id="BC016737">
    <property type="protein sequence ID" value="AAH16737.1"/>
    <property type="status" value="ALT_INIT"/>
    <property type="molecule type" value="mRNA"/>
</dbReference>
<dbReference type="EMBL" id="BC018717">
    <property type="protein sequence ID" value="AAH18717.1"/>
    <property type="molecule type" value="mRNA"/>
</dbReference>
<dbReference type="EMBL" id="CR456523">
    <property type="protein sequence ID" value="CAG30409.1"/>
    <property type="status" value="ALT_INIT"/>
    <property type="molecule type" value="mRNA"/>
</dbReference>
<dbReference type="CCDS" id="CCDS13939.1">
    <molecule id="P25325-1"/>
</dbReference>
<dbReference type="CCDS" id="CCDS46703.1">
    <molecule id="P25325-2"/>
</dbReference>
<dbReference type="PIR" id="JH0461">
    <property type="entry name" value="ROHU"/>
</dbReference>
<dbReference type="RefSeq" id="NP_001013454.1">
    <molecule id="P25325-1"/>
    <property type="nucleotide sequence ID" value="NM_001013436.4"/>
</dbReference>
<dbReference type="RefSeq" id="NP_001123989.1">
    <molecule id="P25325-1"/>
    <property type="nucleotide sequence ID" value="NM_001130517.4"/>
</dbReference>
<dbReference type="RefSeq" id="NP_001356833.1">
    <molecule id="P25325-1"/>
    <property type="nucleotide sequence ID" value="NM_001369904.2"/>
</dbReference>
<dbReference type="RefSeq" id="NP_066949.2">
    <molecule id="P25325-2"/>
    <property type="nucleotide sequence ID" value="NM_021126.8"/>
</dbReference>
<dbReference type="RefSeq" id="XP_005261667.1">
    <property type="nucleotide sequence ID" value="XM_005261610.3"/>
</dbReference>
<dbReference type="PDB" id="3OLH">
    <property type="method" value="X-ray"/>
    <property type="resolution" value="2.50 A"/>
    <property type="chains" value="A=11-289"/>
</dbReference>
<dbReference type="PDB" id="4JGT">
    <property type="method" value="X-ray"/>
    <property type="resolution" value="2.16 A"/>
    <property type="chains" value="A/B/C=11-289"/>
</dbReference>
<dbReference type="PDBsum" id="3OLH"/>
<dbReference type="PDBsum" id="4JGT"/>
<dbReference type="SMR" id="P25325"/>
<dbReference type="BioGRID" id="110497">
    <property type="interactions" value="66"/>
</dbReference>
<dbReference type="DIP" id="DIP-613N"/>
<dbReference type="FunCoup" id="P25325">
    <property type="interactions" value="665"/>
</dbReference>
<dbReference type="IntAct" id="P25325">
    <property type="interactions" value="10"/>
</dbReference>
<dbReference type="MINT" id="P25325"/>
<dbReference type="STRING" id="9606.ENSP00000411719"/>
<dbReference type="GuidetoPHARMACOLOGY" id="1446"/>
<dbReference type="GlyGen" id="P25325">
    <property type="glycosylation" value="1 site, 1 O-linked glycan (1 site)"/>
</dbReference>
<dbReference type="iPTMnet" id="P25325"/>
<dbReference type="PhosphoSitePlus" id="P25325"/>
<dbReference type="SwissPalm" id="P25325"/>
<dbReference type="BioMuta" id="MPST"/>
<dbReference type="DMDM" id="6226903"/>
<dbReference type="OGP" id="P25325"/>
<dbReference type="REPRODUCTION-2DPAGE" id="IPI00165360"/>
<dbReference type="jPOST" id="P25325"/>
<dbReference type="MassIVE" id="P25325"/>
<dbReference type="PaxDb" id="9606-ENSP00000380402"/>
<dbReference type="PeptideAtlas" id="P25325"/>
<dbReference type="ProteomicsDB" id="54268">
    <molecule id="P25325-1"/>
</dbReference>
<dbReference type="Pumba" id="P25325"/>
<dbReference type="Antibodypedia" id="223">
    <property type="antibodies" value="152 antibodies from 25 providers"/>
</dbReference>
<dbReference type="DNASU" id="4357"/>
<dbReference type="Ensembl" id="ENST00000341116.7">
    <molecule id="P25325-1"/>
    <property type="protein sequence ID" value="ENSP00000342333.3"/>
    <property type="gene ID" value="ENSG00000128309.18"/>
</dbReference>
<dbReference type="Ensembl" id="ENST00000397225.2">
    <molecule id="P25325-1"/>
    <property type="protein sequence ID" value="ENSP00000380402.2"/>
    <property type="gene ID" value="ENSG00000128309.18"/>
</dbReference>
<dbReference type="Ensembl" id="ENST00000401419.7">
    <molecule id="P25325-1"/>
    <property type="protein sequence ID" value="ENSP00000384812.3"/>
    <property type="gene ID" value="ENSG00000128309.18"/>
</dbReference>
<dbReference type="Ensembl" id="ENST00000404802.7">
    <molecule id="P25325-1"/>
    <property type="protein sequence ID" value="ENSP00000383950.3"/>
    <property type="gene ID" value="ENSG00000128309.18"/>
</dbReference>
<dbReference type="Ensembl" id="ENST00000429360.6">
    <molecule id="P25325-2"/>
    <property type="protein sequence ID" value="ENSP00000411719.3"/>
    <property type="gene ID" value="ENSG00000128309.18"/>
</dbReference>
<dbReference type="GeneID" id="4357"/>
<dbReference type="KEGG" id="hsa:4357"/>
<dbReference type="MANE-Select" id="ENST00000429360.6">
    <molecule id="P25325-2"/>
    <property type="protein sequence ID" value="ENSP00000411719.3"/>
    <property type="RefSeq nucleotide sequence ID" value="NM_021126.8"/>
    <property type="RefSeq protein sequence ID" value="NP_066949.2"/>
</dbReference>
<dbReference type="UCSC" id="uc003aql.5">
    <molecule id="P25325-1"/>
    <property type="organism name" value="human"/>
</dbReference>
<dbReference type="AGR" id="HGNC:7223"/>
<dbReference type="CTD" id="4357"/>
<dbReference type="DisGeNET" id="4357"/>
<dbReference type="GeneCards" id="MPST"/>
<dbReference type="HGNC" id="HGNC:7223">
    <property type="gene designation" value="MPST"/>
</dbReference>
<dbReference type="HPA" id="ENSG00000128309">
    <property type="expression patterns" value="Tissue enhanced (liver)"/>
</dbReference>
<dbReference type="MIM" id="249650">
    <property type="type" value="phenotype"/>
</dbReference>
<dbReference type="MIM" id="602496">
    <property type="type" value="gene"/>
</dbReference>
<dbReference type="neXtProt" id="NX_P25325"/>
<dbReference type="OpenTargets" id="ENSG00000128309"/>
<dbReference type="PharmGKB" id="PA30928"/>
<dbReference type="VEuPathDB" id="HostDB:ENSG00000128309"/>
<dbReference type="eggNOG" id="KOG1529">
    <property type="taxonomic scope" value="Eukaryota"/>
</dbReference>
<dbReference type="GeneTree" id="ENSGT00510000046773"/>
<dbReference type="HOGENOM" id="CLU_031618_3_1_1"/>
<dbReference type="InParanoid" id="P25325"/>
<dbReference type="OMA" id="NNNWFAS"/>
<dbReference type="OrthoDB" id="270167at2759"/>
<dbReference type="PAN-GO" id="P25325">
    <property type="GO annotations" value="3 GO annotations based on evolutionary models"/>
</dbReference>
<dbReference type="PhylomeDB" id="P25325"/>
<dbReference type="TreeFam" id="TF315133"/>
<dbReference type="BioCyc" id="MetaCyc:HS05177-MONOMER"/>
<dbReference type="BRENDA" id="2.8.1.2">
    <property type="organism ID" value="2681"/>
</dbReference>
<dbReference type="PathwayCommons" id="P25325"/>
<dbReference type="Reactome" id="R-HSA-1614558">
    <property type="pathway name" value="Degradation of cysteine and homocysteine"/>
</dbReference>
<dbReference type="SignaLink" id="P25325"/>
<dbReference type="BioGRID-ORCS" id="4357">
    <property type="hits" value="10 hits in 1160 CRISPR screens"/>
</dbReference>
<dbReference type="ChiTaRS" id="MPST">
    <property type="organism name" value="human"/>
</dbReference>
<dbReference type="EvolutionaryTrace" id="P25325"/>
<dbReference type="GeneWiki" id="MPST"/>
<dbReference type="GenomeRNAi" id="4357"/>
<dbReference type="Pharos" id="P25325">
    <property type="development level" value="Tchem"/>
</dbReference>
<dbReference type="PRO" id="PR:P25325"/>
<dbReference type="Proteomes" id="UP000005640">
    <property type="component" value="Chromosome 22"/>
</dbReference>
<dbReference type="RNAct" id="P25325">
    <property type="molecule type" value="protein"/>
</dbReference>
<dbReference type="Bgee" id="ENSG00000128309">
    <property type="expression patterns" value="Expressed in mucosa of transverse colon and 199 other cell types or tissues"/>
</dbReference>
<dbReference type="ExpressionAtlas" id="P25325">
    <property type="expression patterns" value="baseline and differential"/>
</dbReference>
<dbReference type="GO" id="GO:0070062">
    <property type="term" value="C:extracellular exosome"/>
    <property type="evidence" value="ECO:0007005"/>
    <property type="project" value="UniProtKB"/>
</dbReference>
<dbReference type="GO" id="GO:0005759">
    <property type="term" value="C:mitochondrial matrix"/>
    <property type="evidence" value="ECO:0000304"/>
    <property type="project" value="Reactome"/>
</dbReference>
<dbReference type="GO" id="GO:0005739">
    <property type="term" value="C:mitochondrion"/>
    <property type="evidence" value="ECO:0006056"/>
    <property type="project" value="FlyBase"/>
</dbReference>
<dbReference type="GO" id="GO:0043005">
    <property type="term" value="C:neuron projection"/>
    <property type="evidence" value="ECO:0000250"/>
    <property type="project" value="UniProtKB"/>
</dbReference>
<dbReference type="GO" id="GO:0045202">
    <property type="term" value="C:synapse"/>
    <property type="evidence" value="ECO:0007669"/>
    <property type="project" value="UniProtKB-SubCell"/>
</dbReference>
<dbReference type="GO" id="GO:0016784">
    <property type="term" value="F:3-mercaptopyruvate sulfurtransferase activity"/>
    <property type="evidence" value="ECO:0000250"/>
    <property type="project" value="UniProtKB"/>
</dbReference>
<dbReference type="GO" id="GO:0042802">
    <property type="term" value="F:identical protein binding"/>
    <property type="evidence" value="ECO:0007669"/>
    <property type="project" value="Ensembl"/>
</dbReference>
<dbReference type="GO" id="GO:0004792">
    <property type="term" value="F:thiosulfate-cyanide sulfurtransferase activity"/>
    <property type="evidence" value="ECO:0000318"/>
    <property type="project" value="GO_Central"/>
</dbReference>
<dbReference type="GO" id="GO:0009440">
    <property type="term" value="P:cyanate catabolic process"/>
    <property type="evidence" value="ECO:0000304"/>
    <property type="project" value="ProtInc"/>
</dbReference>
<dbReference type="GO" id="GO:0070814">
    <property type="term" value="P:hydrogen sulfide biosynthetic process"/>
    <property type="evidence" value="ECO:0000250"/>
    <property type="project" value="UniProtKB"/>
</dbReference>
<dbReference type="GO" id="GO:0001822">
    <property type="term" value="P:kidney development"/>
    <property type="evidence" value="ECO:0007669"/>
    <property type="project" value="Ensembl"/>
</dbReference>
<dbReference type="GO" id="GO:0001889">
    <property type="term" value="P:liver development"/>
    <property type="evidence" value="ECO:0007669"/>
    <property type="project" value="Ensembl"/>
</dbReference>
<dbReference type="GO" id="GO:0009636">
    <property type="term" value="P:response to toxic substance"/>
    <property type="evidence" value="ECO:0000304"/>
    <property type="project" value="ProtInc"/>
</dbReference>
<dbReference type="GO" id="GO:0021510">
    <property type="term" value="P:spinal cord development"/>
    <property type="evidence" value="ECO:0007669"/>
    <property type="project" value="Ensembl"/>
</dbReference>
<dbReference type="GO" id="GO:0000098">
    <property type="term" value="P:sulfur amino acid catabolic process"/>
    <property type="evidence" value="ECO:0000304"/>
    <property type="project" value="Reactome"/>
</dbReference>
<dbReference type="GO" id="GO:0019346">
    <property type="term" value="P:transsulfuration"/>
    <property type="evidence" value="ECO:0007669"/>
    <property type="project" value="Ensembl"/>
</dbReference>
<dbReference type="CDD" id="cd01448">
    <property type="entry name" value="TST_Repeat_1"/>
    <property type="match status" value="1"/>
</dbReference>
<dbReference type="CDD" id="cd01449">
    <property type="entry name" value="TST_Repeat_2"/>
    <property type="match status" value="1"/>
</dbReference>
<dbReference type="FunFam" id="3.40.250.10:FF:000001">
    <property type="entry name" value="Sulfurtransferase"/>
    <property type="match status" value="1"/>
</dbReference>
<dbReference type="FunFam" id="3.40.250.10:FF:000008">
    <property type="entry name" value="Sulfurtransferase"/>
    <property type="match status" value="1"/>
</dbReference>
<dbReference type="Gene3D" id="3.40.250.10">
    <property type="entry name" value="Rhodanese-like domain"/>
    <property type="match status" value="2"/>
</dbReference>
<dbReference type="InterPro" id="IPR001763">
    <property type="entry name" value="Rhodanese-like_dom"/>
</dbReference>
<dbReference type="InterPro" id="IPR036873">
    <property type="entry name" value="Rhodanese-like_dom_sf"/>
</dbReference>
<dbReference type="InterPro" id="IPR001307">
    <property type="entry name" value="Thiosulphate_STrfase_CS"/>
</dbReference>
<dbReference type="InterPro" id="IPR045078">
    <property type="entry name" value="TST/MPST-like"/>
</dbReference>
<dbReference type="NCBIfam" id="NF008557">
    <property type="entry name" value="PRK11493.1"/>
    <property type="match status" value="1"/>
</dbReference>
<dbReference type="PANTHER" id="PTHR11364:SF25">
    <property type="entry name" value="3-MERCAPTOPYRUVATE SULFURTRANSFERASE"/>
    <property type="match status" value="1"/>
</dbReference>
<dbReference type="PANTHER" id="PTHR11364">
    <property type="entry name" value="THIOSULFATE SULFERTANSFERASE"/>
    <property type="match status" value="1"/>
</dbReference>
<dbReference type="Pfam" id="PF00581">
    <property type="entry name" value="Rhodanese"/>
    <property type="match status" value="2"/>
</dbReference>
<dbReference type="SMART" id="SM00450">
    <property type="entry name" value="RHOD"/>
    <property type="match status" value="2"/>
</dbReference>
<dbReference type="SUPFAM" id="SSF52821">
    <property type="entry name" value="Rhodanese/Cell cycle control phosphatase"/>
    <property type="match status" value="2"/>
</dbReference>
<dbReference type="PROSITE" id="PS00380">
    <property type="entry name" value="RHODANESE_1"/>
    <property type="match status" value="1"/>
</dbReference>
<dbReference type="PROSITE" id="PS00683">
    <property type="entry name" value="RHODANESE_2"/>
    <property type="match status" value="1"/>
</dbReference>
<dbReference type="PROSITE" id="PS50206">
    <property type="entry name" value="RHODANESE_3"/>
    <property type="match status" value="2"/>
</dbReference>
<evidence type="ECO:0000250" key="1"/>
<evidence type="ECO:0000250" key="2">
    <source>
        <dbReference type="UniProtKB" id="P97532"/>
    </source>
</evidence>
<evidence type="ECO:0000250" key="3">
    <source>
        <dbReference type="UniProtKB" id="Q99J99"/>
    </source>
</evidence>
<evidence type="ECO:0000255" key="4">
    <source>
        <dbReference type="PROSITE-ProRule" id="PRU00173"/>
    </source>
</evidence>
<evidence type="ECO:0000303" key="5">
    <source>
    </source>
</evidence>
<evidence type="ECO:0000305" key="6"/>
<evidence type="ECO:0000305" key="7">
    <source>
    </source>
</evidence>
<evidence type="ECO:0007744" key="8">
    <source>
    </source>
</evidence>
<evidence type="ECO:0007744" key="9">
    <source>
    </source>
</evidence>
<evidence type="ECO:0007744" key="10">
    <source>
    </source>
</evidence>
<evidence type="ECO:0007744" key="11">
    <source>
    </source>
</evidence>
<evidence type="ECO:0007829" key="12">
    <source>
        <dbReference type="PDB" id="3OLH"/>
    </source>
</evidence>
<evidence type="ECO:0007829" key="13">
    <source>
        <dbReference type="PDB" id="4JGT"/>
    </source>
</evidence>
<sequence>MASPQLCRALVSAQWVAEALRAPRAGQPLQLLDASWYLPKLGRDARREFEERHIPGAAFFDIDQCSDRTSPYDHMLPGAEHFAEYAGRLGVGAATHVVIYDASDQGLYSAPRVWWMFRAFGHHAVSLLDGGLRHWLRQNLPLSSGKSQPAPAEFRAQLDPAFIKTYEDIKENLESRRFQVVDSRATGRFRGTEPEPRDGIEPGHIPGTVNIPFTDFLSQEGLEKSPEEIRHLFQEKKVDLSKPLVATCGSGVTACHVALGAYLCGKPDVPIYDGSWVEWYMRARPEDVISEGRGKTH</sequence>
<keyword id="KW-0002">3D-structure</keyword>
<keyword id="KW-0007">Acetylation</keyword>
<keyword id="KW-0025">Alternative splicing</keyword>
<keyword id="KW-0963">Cytoplasm</keyword>
<keyword id="KW-0903">Direct protein sequencing</keyword>
<keyword id="KW-1015">Disulfide bond</keyword>
<keyword id="KW-0496">Mitochondrion</keyword>
<keyword id="KW-0597">Phosphoprotein</keyword>
<keyword id="KW-1267">Proteomics identification</keyword>
<keyword id="KW-0676">Redox-active center</keyword>
<keyword id="KW-1185">Reference proteome</keyword>
<keyword id="KW-0677">Repeat</keyword>
<keyword id="KW-0770">Synapse</keyword>
<keyword id="KW-0771">Synaptosome</keyword>
<keyword id="KW-0808">Transferase</keyword>
<proteinExistence type="evidence at protein level"/>
<accession>P25325</accession>
<accession>A8MZ34</accession>
<accession>B3KP52</accession>
<accession>J3KPV7</accession>
<accession>O75750</accession>
<accession>Q6FHN9</accession>
<organism>
    <name type="scientific">Homo sapiens</name>
    <name type="common">Human</name>
    <dbReference type="NCBI Taxonomy" id="9606"/>
    <lineage>
        <taxon>Eukaryota</taxon>
        <taxon>Metazoa</taxon>
        <taxon>Chordata</taxon>
        <taxon>Craniata</taxon>
        <taxon>Vertebrata</taxon>
        <taxon>Euteleostomi</taxon>
        <taxon>Mammalia</taxon>
        <taxon>Eutheria</taxon>
        <taxon>Euarchontoglires</taxon>
        <taxon>Primates</taxon>
        <taxon>Haplorrhini</taxon>
        <taxon>Catarrhini</taxon>
        <taxon>Hominidae</taxon>
        <taxon>Homo</taxon>
    </lineage>
</organism>
<reference key="1">
    <citation type="journal article" date="1991" name="Biochem. Biophys. Res. Commun.">
        <title>Cloning and sequence analysis of the human liver rhodanese: comparison with the bovine and chicken enzymes.</title>
        <authorList>
            <person name="Pallini R."/>
            <person name="Guazzi G.C."/>
            <person name="Cannella C."/>
            <person name="Cacace M.G."/>
        </authorList>
    </citation>
    <scope>NUCLEOTIDE SEQUENCE [MRNA] (ISOFORM 1)</scope>
    <source>
        <tissue>Liver</tissue>
    </source>
</reference>
<reference key="2">
    <citation type="submission" date="2003-05" db="EMBL/GenBank/DDBJ databases">
        <title>Cloning of human full-length CDSs in BD Creator(TM) system donor vector.</title>
        <authorList>
            <person name="Kalnine N."/>
            <person name="Chen X."/>
            <person name="Rolfs A."/>
            <person name="Halleck A."/>
            <person name="Hines L."/>
            <person name="Eisenstein S."/>
            <person name="Koundinya M."/>
            <person name="Raphael J."/>
            <person name="Moreira D."/>
            <person name="Kelley T."/>
            <person name="LaBaer J."/>
            <person name="Lin Y."/>
            <person name="Phelan M."/>
            <person name="Farmer A."/>
        </authorList>
    </citation>
    <scope>NUCLEOTIDE SEQUENCE [LARGE SCALE MRNA] (ISOFORM 1)</scope>
</reference>
<reference key="3">
    <citation type="journal article" date="2004" name="Nat. Genet.">
        <title>Complete sequencing and characterization of 21,243 full-length human cDNAs.</title>
        <authorList>
            <person name="Ota T."/>
            <person name="Suzuki Y."/>
            <person name="Nishikawa T."/>
            <person name="Otsuki T."/>
            <person name="Sugiyama T."/>
            <person name="Irie R."/>
            <person name="Wakamatsu A."/>
            <person name="Hayashi K."/>
            <person name="Sato H."/>
            <person name="Nagai K."/>
            <person name="Kimura K."/>
            <person name="Makita H."/>
            <person name="Sekine M."/>
            <person name="Obayashi M."/>
            <person name="Nishi T."/>
            <person name="Shibahara T."/>
            <person name="Tanaka T."/>
            <person name="Ishii S."/>
            <person name="Yamamoto J."/>
            <person name="Saito K."/>
            <person name="Kawai Y."/>
            <person name="Isono Y."/>
            <person name="Nakamura Y."/>
            <person name="Nagahari K."/>
            <person name="Murakami K."/>
            <person name="Yasuda T."/>
            <person name="Iwayanagi T."/>
            <person name="Wagatsuma M."/>
            <person name="Shiratori A."/>
            <person name="Sudo H."/>
            <person name="Hosoiri T."/>
            <person name="Kaku Y."/>
            <person name="Kodaira H."/>
            <person name="Kondo H."/>
            <person name="Sugawara M."/>
            <person name="Takahashi M."/>
            <person name="Kanda K."/>
            <person name="Yokoi T."/>
            <person name="Furuya T."/>
            <person name="Kikkawa E."/>
            <person name="Omura Y."/>
            <person name="Abe K."/>
            <person name="Kamihara K."/>
            <person name="Katsuta N."/>
            <person name="Sato K."/>
            <person name="Tanikawa M."/>
            <person name="Yamazaki M."/>
            <person name="Ninomiya K."/>
            <person name="Ishibashi T."/>
            <person name="Yamashita H."/>
            <person name="Murakawa K."/>
            <person name="Fujimori K."/>
            <person name="Tanai H."/>
            <person name="Kimata M."/>
            <person name="Watanabe M."/>
            <person name="Hiraoka S."/>
            <person name="Chiba Y."/>
            <person name="Ishida S."/>
            <person name="Ono Y."/>
            <person name="Takiguchi S."/>
            <person name="Watanabe S."/>
            <person name="Yosida M."/>
            <person name="Hotuta T."/>
            <person name="Kusano J."/>
            <person name="Kanehori K."/>
            <person name="Takahashi-Fujii A."/>
            <person name="Hara H."/>
            <person name="Tanase T.-O."/>
            <person name="Nomura Y."/>
            <person name="Togiya S."/>
            <person name="Komai F."/>
            <person name="Hara R."/>
            <person name="Takeuchi K."/>
            <person name="Arita M."/>
            <person name="Imose N."/>
            <person name="Musashino K."/>
            <person name="Yuuki H."/>
            <person name="Oshima A."/>
            <person name="Sasaki N."/>
            <person name="Aotsuka S."/>
            <person name="Yoshikawa Y."/>
            <person name="Matsunawa H."/>
            <person name="Ichihara T."/>
            <person name="Shiohata N."/>
            <person name="Sano S."/>
            <person name="Moriya S."/>
            <person name="Momiyama H."/>
            <person name="Satoh N."/>
            <person name="Takami S."/>
            <person name="Terashima Y."/>
            <person name="Suzuki O."/>
            <person name="Nakagawa S."/>
            <person name="Senoh A."/>
            <person name="Mizoguchi H."/>
            <person name="Goto Y."/>
            <person name="Shimizu F."/>
            <person name="Wakebe H."/>
            <person name="Hishigaki H."/>
            <person name="Watanabe T."/>
            <person name="Sugiyama A."/>
            <person name="Takemoto M."/>
            <person name="Kawakami B."/>
            <person name="Yamazaki M."/>
            <person name="Watanabe K."/>
            <person name="Kumagai A."/>
            <person name="Itakura S."/>
            <person name="Fukuzumi Y."/>
            <person name="Fujimori Y."/>
            <person name="Komiyama M."/>
            <person name="Tashiro H."/>
            <person name="Tanigami A."/>
            <person name="Fujiwara T."/>
            <person name="Ono T."/>
            <person name="Yamada K."/>
            <person name="Fujii Y."/>
            <person name="Ozaki K."/>
            <person name="Hirao M."/>
            <person name="Ohmori Y."/>
            <person name="Kawabata A."/>
            <person name="Hikiji T."/>
            <person name="Kobatake N."/>
            <person name="Inagaki H."/>
            <person name="Ikema Y."/>
            <person name="Okamoto S."/>
            <person name="Okitani R."/>
            <person name="Kawakami T."/>
            <person name="Noguchi S."/>
            <person name="Itoh T."/>
            <person name="Shigeta K."/>
            <person name="Senba T."/>
            <person name="Matsumura K."/>
            <person name="Nakajima Y."/>
            <person name="Mizuno T."/>
            <person name="Morinaga M."/>
            <person name="Sasaki M."/>
            <person name="Togashi T."/>
            <person name="Oyama M."/>
            <person name="Hata H."/>
            <person name="Watanabe M."/>
            <person name="Komatsu T."/>
            <person name="Mizushima-Sugano J."/>
            <person name="Satoh T."/>
            <person name="Shirai Y."/>
            <person name="Takahashi Y."/>
            <person name="Nakagawa K."/>
            <person name="Okumura K."/>
            <person name="Nagase T."/>
            <person name="Nomura N."/>
            <person name="Kikuchi H."/>
            <person name="Masuho Y."/>
            <person name="Yamashita R."/>
            <person name="Nakai K."/>
            <person name="Yada T."/>
            <person name="Nakamura Y."/>
            <person name="Ohara O."/>
            <person name="Isogai T."/>
            <person name="Sugano S."/>
        </authorList>
    </citation>
    <scope>NUCLEOTIDE SEQUENCE [LARGE SCALE MRNA] (ISOFORM 1)</scope>
    <source>
        <tissue>Kidney</tissue>
    </source>
</reference>
<reference key="4">
    <citation type="submission" date="2004-06" db="EMBL/GenBank/DDBJ databases">
        <title>Cloning of human full open reading frames in Gateway(TM) system entry vector (pDONR201).</title>
        <authorList>
            <person name="Ebert L."/>
            <person name="Schick M."/>
            <person name="Neubert P."/>
            <person name="Schatten R."/>
            <person name="Henze S."/>
            <person name="Korn B."/>
        </authorList>
    </citation>
    <scope>NUCLEOTIDE SEQUENCE [LARGE SCALE MRNA] (ISOFORM 1)</scope>
</reference>
<reference key="5">
    <citation type="journal article" date="1999" name="Nature">
        <title>The DNA sequence of human chromosome 22.</title>
        <authorList>
            <person name="Dunham I."/>
            <person name="Hunt A.R."/>
            <person name="Collins J.E."/>
            <person name="Bruskiewich R."/>
            <person name="Beare D.M."/>
            <person name="Clamp M."/>
            <person name="Smink L.J."/>
            <person name="Ainscough R."/>
            <person name="Almeida J.P."/>
            <person name="Babbage A.K."/>
            <person name="Bagguley C."/>
            <person name="Bailey J."/>
            <person name="Barlow K.F."/>
            <person name="Bates K.N."/>
            <person name="Beasley O.P."/>
            <person name="Bird C.P."/>
            <person name="Blakey S.E."/>
            <person name="Bridgeman A.M."/>
            <person name="Buck D."/>
            <person name="Burgess J."/>
            <person name="Burrill W.D."/>
            <person name="Burton J."/>
            <person name="Carder C."/>
            <person name="Carter N.P."/>
            <person name="Chen Y."/>
            <person name="Clark G."/>
            <person name="Clegg S.M."/>
            <person name="Cobley V.E."/>
            <person name="Cole C.G."/>
            <person name="Collier R.E."/>
            <person name="Connor R."/>
            <person name="Conroy D."/>
            <person name="Corby N.R."/>
            <person name="Coville G.J."/>
            <person name="Cox A.V."/>
            <person name="Davis J."/>
            <person name="Dawson E."/>
            <person name="Dhami P.D."/>
            <person name="Dockree C."/>
            <person name="Dodsworth S.J."/>
            <person name="Durbin R.M."/>
            <person name="Ellington A.G."/>
            <person name="Evans K.L."/>
            <person name="Fey J.M."/>
            <person name="Fleming K."/>
            <person name="French L."/>
            <person name="Garner A.A."/>
            <person name="Gilbert J.G.R."/>
            <person name="Goward M.E."/>
            <person name="Grafham D.V."/>
            <person name="Griffiths M.N.D."/>
            <person name="Hall C."/>
            <person name="Hall R.E."/>
            <person name="Hall-Tamlyn G."/>
            <person name="Heathcott R.W."/>
            <person name="Ho S."/>
            <person name="Holmes S."/>
            <person name="Hunt S.E."/>
            <person name="Jones M.C."/>
            <person name="Kershaw J."/>
            <person name="Kimberley A.M."/>
            <person name="King A."/>
            <person name="Laird G.K."/>
            <person name="Langford C.F."/>
            <person name="Leversha M.A."/>
            <person name="Lloyd C."/>
            <person name="Lloyd D.M."/>
            <person name="Martyn I.D."/>
            <person name="Mashreghi-Mohammadi M."/>
            <person name="Matthews L.H."/>
            <person name="Mccann O.T."/>
            <person name="Mcclay J."/>
            <person name="Mclaren S."/>
            <person name="McMurray A.A."/>
            <person name="Milne S.A."/>
            <person name="Mortimore B.J."/>
            <person name="Odell C.N."/>
            <person name="Pavitt R."/>
            <person name="Pearce A.V."/>
            <person name="Pearson D."/>
            <person name="Phillimore B.J.C.T."/>
            <person name="Phillips S.H."/>
            <person name="Plumb R.W."/>
            <person name="Ramsay H."/>
            <person name="Ramsey Y."/>
            <person name="Rogers L."/>
            <person name="Ross M.T."/>
            <person name="Scott C.E."/>
            <person name="Sehra H.K."/>
            <person name="Skuce C.D."/>
            <person name="Smalley S."/>
            <person name="Smith M.L."/>
            <person name="Soderlund C."/>
            <person name="Spragon L."/>
            <person name="Steward C.A."/>
            <person name="Sulston J.E."/>
            <person name="Swann R.M."/>
            <person name="Vaudin M."/>
            <person name="Wall M."/>
            <person name="Wallis J.M."/>
            <person name="Whiteley M.N."/>
            <person name="Willey D.L."/>
            <person name="Williams L."/>
            <person name="Williams S.A."/>
            <person name="Williamson H."/>
            <person name="Wilmer T.E."/>
            <person name="Wilming L."/>
            <person name="Wright C.L."/>
            <person name="Hubbard T."/>
            <person name="Bentley D.R."/>
            <person name="Beck S."/>
            <person name="Rogers J."/>
            <person name="Shimizu N."/>
            <person name="Minoshima S."/>
            <person name="Kawasaki K."/>
            <person name="Sasaki T."/>
            <person name="Asakawa S."/>
            <person name="Kudoh J."/>
            <person name="Shintani A."/>
            <person name="Shibuya K."/>
            <person name="Yoshizaki Y."/>
            <person name="Aoki N."/>
            <person name="Mitsuyama S."/>
            <person name="Roe B.A."/>
            <person name="Chen F."/>
            <person name="Chu L."/>
            <person name="Crabtree J."/>
            <person name="Deschamps S."/>
            <person name="Do A."/>
            <person name="Do T."/>
            <person name="Dorman A."/>
            <person name="Fang F."/>
            <person name="Fu Y."/>
            <person name="Hu P."/>
            <person name="Hua A."/>
            <person name="Kenton S."/>
            <person name="Lai H."/>
            <person name="Lao H.I."/>
            <person name="Lewis J."/>
            <person name="Lewis S."/>
            <person name="Lin S.-P."/>
            <person name="Loh P."/>
            <person name="Malaj E."/>
            <person name="Nguyen T."/>
            <person name="Pan H."/>
            <person name="Phan S."/>
            <person name="Qi S."/>
            <person name="Qian Y."/>
            <person name="Ray L."/>
            <person name="Ren Q."/>
            <person name="Shaull S."/>
            <person name="Sloan D."/>
            <person name="Song L."/>
            <person name="Wang Q."/>
            <person name="Wang Y."/>
            <person name="Wang Z."/>
            <person name="White J."/>
            <person name="Willingham D."/>
            <person name="Wu H."/>
            <person name="Yao Z."/>
            <person name="Zhan M."/>
            <person name="Zhang G."/>
            <person name="Chissoe S."/>
            <person name="Murray J."/>
            <person name="Miller N."/>
            <person name="Minx P."/>
            <person name="Fulton R."/>
            <person name="Johnson D."/>
            <person name="Bemis G."/>
            <person name="Bentley D."/>
            <person name="Bradshaw H."/>
            <person name="Bourne S."/>
            <person name="Cordes M."/>
            <person name="Du Z."/>
            <person name="Fulton L."/>
            <person name="Goela D."/>
            <person name="Graves T."/>
            <person name="Hawkins J."/>
            <person name="Hinds K."/>
            <person name="Kemp K."/>
            <person name="Latreille P."/>
            <person name="Layman D."/>
            <person name="Ozersky P."/>
            <person name="Rohlfing T."/>
            <person name="Scheet P."/>
            <person name="Walker C."/>
            <person name="Wamsley A."/>
            <person name="Wohldmann P."/>
            <person name="Pepin K."/>
            <person name="Nelson J."/>
            <person name="Korf I."/>
            <person name="Bedell J.A."/>
            <person name="Hillier L.W."/>
            <person name="Mardis E."/>
            <person name="Waterston R."/>
            <person name="Wilson R."/>
            <person name="Emanuel B.S."/>
            <person name="Shaikh T."/>
            <person name="Kurahashi H."/>
            <person name="Saitta S."/>
            <person name="Budarf M.L."/>
            <person name="McDermid H.E."/>
            <person name="Johnson A."/>
            <person name="Wong A.C.C."/>
            <person name="Morrow B.E."/>
            <person name="Edelmann L."/>
            <person name="Kim U.J."/>
            <person name="Shizuya H."/>
            <person name="Simon M.I."/>
            <person name="Dumanski J.P."/>
            <person name="Peyrard M."/>
            <person name="Kedra D."/>
            <person name="Seroussi E."/>
            <person name="Fransson I."/>
            <person name="Tapia I."/>
            <person name="Bruder C.E."/>
            <person name="O'Brien K.P."/>
            <person name="Wilkinson P."/>
            <person name="Bodenteich A."/>
            <person name="Hartman K."/>
            <person name="Hu X."/>
            <person name="Khan A.S."/>
            <person name="Lane L."/>
            <person name="Tilahun Y."/>
            <person name="Wright H."/>
        </authorList>
    </citation>
    <scope>NUCLEOTIDE SEQUENCE [LARGE SCALE GENOMIC DNA]</scope>
</reference>
<reference key="6">
    <citation type="submission" date="2005-07" db="EMBL/GenBank/DDBJ databases">
        <authorList>
            <person name="Mural R.J."/>
            <person name="Istrail S."/>
            <person name="Sutton G.G."/>
            <person name="Florea L."/>
            <person name="Halpern A.L."/>
            <person name="Mobarry C.M."/>
            <person name="Lippert R."/>
            <person name="Walenz B."/>
            <person name="Shatkay H."/>
            <person name="Dew I."/>
            <person name="Miller J.R."/>
            <person name="Flanigan M.J."/>
            <person name="Edwards N.J."/>
            <person name="Bolanos R."/>
            <person name="Fasulo D."/>
            <person name="Halldorsson B.V."/>
            <person name="Hannenhalli S."/>
            <person name="Turner R."/>
            <person name="Yooseph S."/>
            <person name="Lu F."/>
            <person name="Nusskern D.R."/>
            <person name="Shue B.C."/>
            <person name="Zheng X.H."/>
            <person name="Zhong F."/>
            <person name="Delcher A.L."/>
            <person name="Huson D.H."/>
            <person name="Kravitz S.A."/>
            <person name="Mouchard L."/>
            <person name="Reinert K."/>
            <person name="Remington K.A."/>
            <person name="Clark A.G."/>
            <person name="Waterman M.S."/>
            <person name="Eichler E.E."/>
            <person name="Adams M.D."/>
            <person name="Hunkapiller M.W."/>
            <person name="Myers E.W."/>
            <person name="Venter J.C."/>
        </authorList>
    </citation>
    <scope>NUCLEOTIDE SEQUENCE [LARGE SCALE GENOMIC DNA]</scope>
</reference>
<reference key="7">
    <citation type="journal article" date="2004" name="Genome Res.">
        <title>The status, quality, and expansion of the NIH full-length cDNA project: the Mammalian Gene Collection (MGC).</title>
        <authorList>
            <consortium name="The MGC Project Team"/>
        </authorList>
    </citation>
    <scope>NUCLEOTIDE SEQUENCE [LARGE SCALE MRNA] (ISOFORMS 1 AND 2)</scope>
    <source>
        <tissue>Bone marrow</tissue>
        <tissue>Muscle</tissue>
        <tissue>Pancreas</tissue>
    </source>
</reference>
<reference key="8">
    <citation type="journal article" date="2004" name="Genome Biol.">
        <title>A genome annotation-driven approach to cloning the human ORFeome.</title>
        <authorList>
            <person name="Collins J.E."/>
            <person name="Wright C.L."/>
            <person name="Edwards C.A."/>
            <person name="Davis M.P."/>
            <person name="Grinham J.A."/>
            <person name="Cole C.G."/>
            <person name="Goward M.E."/>
            <person name="Aguado B."/>
            <person name="Mallya M."/>
            <person name="Mokrab Y."/>
            <person name="Huckle E.J."/>
            <person name="Beare D.M."/>
            <person name="Dunham I."/>
        </authorList>
    </citation>
    <scope>PARTIAL NUCLEOTIDE SEQUENCE [LARGE SCALE MRNA] (ISOFORM 2)</scope>
</reference>
<reference key="9">
    <citation type="submission" date="2007-03" db="UniProtKB">
        <authorList>
            <person name="Lubec G."/>
            <person name="Afjehi-Sadat L."/>
        </authorList>
    </citation>
    <scope>PROTEIN SEQUENCE OF 89-112 AND 119-133</scope>
    <scope>IDENTIFICATION BY MASS SPECTROMETRY</scope>
    <source>
        <tissue>Brain</tissue>
        <tissue>Cajal-Retzius cell</tissue>
    </source>
</reference>
<reference key="10">
    <citation type="journal article" date="1969" name="Am. J. Dis. Child.">
        <title>Mental deficiency and a new aminoaciduria.</title>
        <authorList>
            <person name="Ampola M.G."/>
            <person name="Efron M.L."/>
            <person name="Bixby E.M."/>
            <person name="Meshorer E."/>
        </authorList>
    </citation>
    <scope>ASSOCIATION WITH MERCAPTOLACTATE CYSTEINE DISULFIDURIA</scope>
</reference>
<reference key="11">
    <citation type="journal article" date="1973" name="Clin. Chim. Acta">
        <title>beta-Mercaptolactate cysteine disulfiduria in two normal sisters. Isolation and characterization of beta-mercaptolactate cysteine disulfide.</title>
        <authorList>
            <person name="Niederwiesler A."/>
            <person name="Giliberti P."/>
            <person name="Baerlocher K."/>
        </authorList>
    </citation>
    <scope>ASSOCIATION WITH MERCAPTOLACTATE CYSTEINE DISULFIDURIA</scope>
</reference>
<reference key="12">
    <citation type="journal article" date="1981" name="Biochem. Med.">
        <title>3-mercaptolactate cysteine disulfiduria: biochemical studies on affected and unaffected members of a family.</title>
        <authorList>
            <person name="Hannestad U."/>
            <person name="Martensson J."/>
            <person name="Sjodahl R."/>
            <person name="Sorbo B."/>
        </authorList>
    </citation>
    <scope>ASSOCIATION WITH MERCAPTOLACTATE CYSTEINE DISULFIDURIA</scope>
</reference>
<reference key="13">
    <citation type="journal article" date="2008" name="Proc. Natl. Acad. Sci. U.S.A.">
        <title>A quantitative atlas of mitotic phosphorylation.</title>
        <authorList>
            <person name="Dephoure N."/>
            <person name="Zhou C."/>
            <person name="Villen J."/>
            <person name="Beausoleil S.A."/>
            <person name="Bakalarski C.E."/>
            <person name="Elledge S.J."/>
            <person name="Gygi S.P."/>
        </authorList>
    </citation>
    <scope>PHOSPHORYLATION [LARGE SCALE ANALYSIS] AT SER-15 (ISOFORM 2)</scope>
    <scope>IDENTIFICATION BY MASS SPECTROMETRY [LARGE SCALE ANALYSIS]</scope>
    <source>
        <tissue>Cervix carcinoma</tissue>
    </source>
</reference>
<reference key="14">
    <citation type="journal article" date="2011" name="BMC Syst. Biol.">
        <title>Initial characterization of the human central proteome.</title>
        <authorList>
            <person name="Burkard T.R."/>
            <person name="Planyavsky M."/>
            <person name="Kaupe I."/>
            <person name="Breitwieser F.P."/>
            <person name="Buerckstuemmer T."/>
            <person name="Bennett K.L."/>
            <person name="Superti-Furga G."/>
            <person name="Colinge J."/>
        </authorList>
    </citation>
    <scope>IDENTIFICATION BY MASS SPECTROMETRY [LARGE SCALE ANALYSIS]</scope>
</reference>
<reference key="15">
    <citation type="journal article" date="2012" name="Proc. Natl. Acad. Sci. U.S.A.">
        <title>N-terminal acetylome analyses and functional insights of the N-terminal acetyltransferase NatB.</title>
        <authorList>
            <person name="Van Damme P."/>
            <person name="Lasa M."/>
            <person name="Polevoda B."/>
            <person name="Gazquez C."/>
            <person name="Elosegui-Artola A."/>
            <person name="Kim D.S."/>
            <person name="De Juan-Pardo E."/>
            <person name="Demeyer K."/>
            <person name="Hole K."/>
            <person name="Larrea E."/>
            <person name="Timmerman E."/>
            <person name="Prieto J."/>
            <person name="Arnesen T."/>
            <person name="Sherman F."/>
            <person name="Gevaert K."/>
            <person name="Aldabe R."/>
        </authorList>
    </citation>
    <scope>ACETYLATION [LARGE SCALE ANALYSIS] AT ALA-2</scope>
    <scope>CLEAVAGE OF INITIATOR METHIONINE [LARGE SCALE ANALYSIS]</scope>
    <scope>IDENTIFICATION BY MASS SPECTROMETRY [LARGE SCALE ANALYSIS]</scope>
</reference>
<reference key="16">
    <citation type="journal article" date="2014" name="J. Proteomics">
        <title>An enzyme assisted RP-RPLC approach for in-depth analysis of human liver phosphoproteome.</title>
        <authorList>
            <person name="Bian Y."/>
            <person name="Song C."/>
            <person name="Cheng K."/>
            <person name="Dong M."/>
            <person name="Wang F."/>
            <person name="Huang J."/>
            <person name="Sun D."/>
            <person name="Wang L."/>
            <person name="Ye M."/>
            <person name="Zou H."/>
        </authorList>
    </citation>
    <scope>PHOSPHORYLATION [LARGE SCALE ANALYSIS] AT SER-3 AND SER-35</scope>
    <scope>PHOSPHORYLATION [LARGE SCALE ANALYSIS] AT SER-15 AND SER-23 (ISOFORM 2)</scope>
    <scope>IDENTIFICATION BY MASS SPECTROMETRY [LARGE SCALE ANALYSIS]</scope>
    <source>
        <tissue>Liver</tissue>
    </source>
</reference>
<reference key="17">
    <citation type="journal article" date="2015" name="Proteomics">
        <title>N-terminome analysis of the human mitochondrial proteome.</title>
        <authorList>
            <person name="Vaca Jacome A.S."/>
            <person name="Rabilloud T."/>
            <person name="Schaeffer-Reiss C."/>
            <person name="Rompais M."/>
            <person name="Ayoub D."/>
            <person name="Lane L."/>
            <person name="Bairoch A."/>
            <person name="Van Dorsselaer A."/>
            <person name="Carapito C."/>
        </authorList>
    </citation>
    <scope>ACETYLATION [LARGE SCALE ANALYSIS] AT ALA-2</scope>
    <scope>CLEAVAGE OF INITIATOR METHIONINE [LARGE SCALE ANALYSIS]</scope>
    <scope>IDENTIFICATION BY MASS SPECTROMETRY [LARGE SCALE ANALYSIS]</scope>
</reference>
<reference key="18">
    <citation type="submission" date="2010-09" db="PDB data bank">
        <title>Human 3-mercaptopyruvate sulfurtransferase.</title>
        <authorList>
            <consortium name="Structural genomics consortium (SGC)"/>
        </authorList>
    </citation>
    <scope>X-RAY CRYSTALLOGRAPHY (2.50 ANGSTROMS) OF 11-289</scope>
</reference>
<comment type="function">
    <text evidence="2">Transfer of a sulfur ion to cyanide or to other thiol compounds. Also has weak rhodanese activity. Detoxifies cyanide and is required for thiosulfate biosynthesis. Acts as an antioxidant. In combination with cysteine aminotransferase (CAT), contributes to the catabolism of cysteine and is an important producer of hydrogen sulfide in the brain, retina and vascular endothelial cells. Hydrogen sulfide H(2)S is an important synaptic modulator, signaling molecule, smooth muscle contractor and neuroprotectant. Its production by the 3MST/CAT pathway is regulated by calcium ions.</text>
</comment>
<comment type="catalytic activity">
    <reaction evidence="2">
        <text>2-oxo-3-sulfanylpropanoate + [thioredoxin]-dithiol = [thioredoxin]-disulfide + hydrogen sulfide + pyruvate + H(+)</text>
        <dbReference type="Rhea" id="RHEA:21740"/>
        <dbReference type="Rhea" id="RHEA-COMP:10698"/>
        <dbReference type="Rhea" id="RHEA-COMP:10700"/>
        <dbReference type="ChEBI" id="CHEBI:15361"/>
        <dbReference type="ChEBI" id="CHEBI:15378"/>
        <dbReference type="ChEBI" id="CHEBI:29919"/>
        <dbReference type="ChEBI" id="CHEBI:29950"/>
        <dbReference type="ChEBI" id="CHEBI:50058"/>
        <dbReference type="ChEBI" id="CHEBI:57678"/>
        <dbReference type="EC" id="2.8.1.2"/>
    </reaction>
</comment>
<comment type="activity regulation">
    <text evidence="2">By oxidative stress, and thioredoxin. Under oxidative stress conditions, the catalytic cysteine site is converted to a sulfenate which inhibits the MPST enzyme activity. Reduced thioredoxin cleaves an intersubunit disulfide bond to turn on the redox switch and reactivate the enzyme.</text>
</comment>
<comment type="subunit">
    <text evidence="2">Monomer (active form). Homodimer; disulfide-linked (inactive form).</text>
</comment>
<comment type="interaction">
    <interactant intactId="EBI-2515082">
        <id>P25325</id>
    </interactant>
    <interactant intactId="EBI-740037">
        <id>O96006</id>
        <label>ZBED1</label>
    </interactant>
    <organismsDiffer>false</organismsDiffer>
    <experiments>3</experiments>
</comment>
<comment type="subcellular location">
    <subcellularLocation>
        <location evidence="2">Cytoplasm</location>
    </subcellularLocation>
    <subcellularLocation>
        <location evidence="2">Mitochondrion</location>
    </subcellularLocation>
    <subcellularLocation>
        <location evidence="3">Synapse</location>
        <location evidence="3">Synaptosome</location>
    </subcellularLocation>
</comment>
<comment type="alternative products">
    <event type="alternative splicing"/>
    <isoform>
        <id>P25325-1</id>
        <name>1</name>
        <sequence type="displayed"/>
    </isoform>
    <isoform>
        <id>P25325-2</id>
        <name>2</name>
        <sequence type="described" ref="VSP_055027"/>
    </isoform>
</comment>
<comment type="domain">
    <text evidence="1">Contains two rhodanese domains with different primary structures but with near identical secondary structure conformations suggesting a common evolutionary origin. Only the C-terminal rhodanese domain contains the catalytic cysteine residue (By similarity).</text>
</comment>
<comment type="disease">
    <text>Aberrant MPST activity is found in a few cases of mercaptolactate-cysteine disulfiduria (MCDU) characterized by the appearance of large quantaties of the sulfur-containing amino acid, beta-mercaptolactate-cysteine disulfide, in the urine (PubMed:4690911, PubMed:4973015, PubMed:6945862). Some cases have associated intellectual disability (PubMed:4973015, PubMed:6945862).</text>
</comment>
<comment type="miscellaneous">
    <text evidence="3">Thioredoxin (Trx) or dihydrolipoic acid (DHLA) are required to release hydrogen sulfide from the persulfide intermediate.</text>
</comment>
<comment type="caution">
    <text evidence="7">Was originally thought to be rhodanese.</text>
</comment>
<comment type="sequence caution" evidence="6">
    <conflict type="erroneous initiation">
        <sequence resource="EMBL-CDS" id="AAH16737"/>
    </conflict>
    <text>Truncated N-terminus.</text>
</comment>
<comment type="sequence caution" evidence="6">
    <conflict type="erroneous initiation">
        <sequence resource="EMBL-CDS" id="CAG30409"/>
    </conflict>
    <text>Truncated N-terminus.</text>
</comment>
<name>THTM_HUMAN</name>
<feature type="initiator methionine" description="Removed" evidence="9 11">
    <location>
        <position position="1"/>
    </location>
</feature>
<feature type="chain" id="PRO_0000139398" description="3-mercaptopyruvate sulfurtransferase">
    <location>
        <begin position="2"/>
        <end position="297"/>
    </location>
</feature>
<feature type="domain" description="Rhodanese 1" evidence="4">
    <location>
        <begin position="25"/>
        <end position="144"/>
    </location>
</feature>
<feature type="domain" description="Rhodanese 2" evidence="4">
    <location>
        <begin position="174"/>
        <end position="288"/>
    </location>
</feature>
<feature type="region of interest" description="Hinge">
    <location>
        <begin position="145"/>
        <end position="160"/>
    </location>
</feature>
<feature type="active site" description="Cysteine persulfide intermediate" evidence="4">
    <location>
        <position position="248"/>
    </location>
</feature>
<feature type="binding site" evidence="1">
    <location>
        <position position="188"/>
    </location>
    <ligand>
        <name>substrate</name>
    </ligand>
</feature>
<feature type="modified residue" description="N-acetylalanine" evidence="9 11">
    <location>
        <position position="2"/>
    </location>
</feature>
<feature type="modified residue" description="Phosphoserine" evidence="10">
    <location>
        <position position="3"/>
    </location>
</feature>
<feature type="modified residue" description="Phosphoserine" evidence="10">
    <location>
        <position position="35"/>
    </location>
</feature>
<feature type="modified residue" description="N6-acetyllysine; alternate" evidence="3">
    <location>
        <position position="40"/>
    </location>
</feature>
<feature type="modified residue" description="N6-succinyllysine; alternate" evidence="3">
    <location>
        <position position="40"/>
    </location>
</feature>
<feature type="modified residue" description="N6-succinyllysine" evidence="3">
    <location>
        <position position="146"/>
    </location>
</feature>
<feature type="modified residue" description="N6-succinyllysine" evidence="3">
    <location>
        <position position="164"/>
    </location>
</feature>
<feature type="disulfide bond" description="Interchain (with C-264); redox-active" evidence="1">
    <location>
        <position position="264"/>
    </location>
</feature>
<feature type="splice variant" id="VSP_055027" description="In isoform 2." evidence="5">
    <original>M</original>
    <variation>MAEPGSRESETRARSPSVAAM</variation>
    <location>
        <position position="1"/>
    </location>
</feature>
<feature type="sequence conflict" description="In Ref. 1; CAA42060." evidence="6" ref="1">
    <original>RRE</original>
    <variation>TQ</variation>
    <location>
        <begin position="46"/>
        <end position="48"/>
    </location>
</feature>
<feature type="sequence conflict" description="In Ref. 3; BAG51564." evidence="6" ref="3">
    <original>I</original>
    <variation>T</variation>
    <location>
        <position position="205"/>
    </location>
</feature>
<feature type="helix" evidence="13">
    <location>
        <begin position="13"/>
        <end position="21"/>
    </location>
</feature>
<feature type="strand" evidence="13">
    <location>
        <begin position="29"/>
        <end position="33"/>
    </location>
</feature>
<feature type="helix" evidence="13">
    <location>
        <begin position="39"/>
        <end position="41"/>
    </location>
</feature>
<feature type="helix" evidence="13">
    <location>
        <begin position="45"/>
        <end position="51"/>
    </location>
</feature>
<feature type="turn" evidence="13">
    <location>
        <begin position="62"/>
        <end position="64"/>
    </location>
</feature>
<feature type="strand" evidence="12">
    <location>
        <begin position="71"/>
        <end position="74"/>
    </location>
</feature>
<feature type="helix" evidence="13">
    <location>
        <begin position="79"/>
        <end position="88"/>
    </location>
</feature>
<feature type="strand" evidence="13">
    <location>
        <begin position="96"/>
        <end position="100"/>
    </location>
</feature>
<feature type="helix" evidence="13">
    <location>
        <begin position="110"/>
        <end position="119"/>
    </location>
</feature>
<feature type="strand" evidence="13">
    <location>
        <begin position="125"/>
        <end position="128"/>
    </location>
</feature>
<feature type="helix" evidence="13">
    <location>
        <begin position="131"/>
        <end position="137"/>
    </location>
</feature>
<feature type="helix" evidence="13">
    <location>
        <begin position="160"/>
        <end position="162"/>
    </location>
</feature>
<feature type="helix" evidence="13">
    <location>
        <begin position="166"/>
        <end position="175"/>
    </location>
</feature>
<feature type="strand" evidence="13">
    <location>
        <begin position="178"/>
        <end position="182"/>
    </location>
</feature>
<feature type="helix" evidence="13">
    <location>
        <begin position="186"/>
        <end position="189"/>
    </location>
</feature>
<feature type="helix" evidence="13">
    <location>
        <begin position="213"/>
        <end position="216"/>
    </location>
</feature>
<feature type="strand" evidence="12">
    <location>
        <begin position="219"/>
        <end position="221"/>
    </location>
</feature>
<feature type="helix" evidence="13">
    <location>
        <begin position="226"/>
        <end position="235"/>
    </location>
</feature>
<feature type="strand" evidence="13">
    <location>
        <begin position="244"/>
        <end position="247"/>
    </location>
</feature>
<feature type="strand" evidence="13">
    <location>
        <begin position="249"/>
        <end position="252"/>
    </location>
</feature>
<feature type="helix" evidence="13">
    <location>
        <begin position="255"/>
        <end position="263"/>
    </location>
</feature>
<feature type="strand" evidence="13">
    <location>
        <begin position="271"/>
        <end position="274"/>
    </location>
</feature>
<feature type="helix" evidence="13">
    <location>
        <begin position="275"/>
        <end position="283"/>
    </location>
</feature>
<feature type="modified residue" description="Phosphoserine" evidence="8 10">
    <location sequence="P25325-2">
        <position position="15"/>
    </location>
</feature>
<feature type="modified residue" description="Phosphoserine" evidence="10">
    <location sequence="P25325-2">
        <position position="23"/>
    </location>
</feature>
<gene>
    <name type="primary">MPST</name>
    <name type="synonym">TST2</name>
</gene>